<proteinExistence type="inferred from homology"/>
<sequence length="526" mass="58675">MRQRITYIQKPSLPFHPSQTTLTRDSLYVESLDAAREERVTFSFDELPSELWQVLRQCHQLHIRWASERAFEAVSPLSSRISPGLHVFYSPVEAGRAKRDSEGREPLCTLLKKVFDDELRCESPEKSFITPPILSKRFASTTAYQFYELLPSLGNLVTYIQQKFCGTDDKCHQRAASILSADSVDINYDSISHALTMSGFWSQAPGEQGWTETIGKHEGGTDKVEIGLLGAEPASEPEEIKVGGLLAVVGQDEELKPTLFSFPSRHHPLHEDATYSVTFPPPTGLHPTMTISIAPEALKEPPRRPDATCALHAYLTLPSKLFGDKYQLSTTDPLFLKSHNLASLRAVAGETDLEAPDWSISRWGSNWLLELASPSESDEVAEEWNITIPLHLRYLPPSESGYQPASVPWPVVFWACSAEDGTKMGVNPFDRINLGWEGLFGPRTMFYQLHPSPSPEGGNLVEELEVPVLTLKENSGIFNSQVIELGTFAVISIGFLWVLWKLGLVARSSGIRPQHQRNPGKRDKAE</sequence>
<protein>
    <recommendedName>
        <fullName>Protein pbn1</fullName>
    </recommendedName>
</protein>
<evidence type="ECO:0000250" key="1"/>
<evidence type="ECO:0000255" key="2"/>
<evidence type="ECO:0000305" key="3"/>
<keyword id="KW-0256">Endoplasmic reticulum</keyword>
<keyword id="KW-0325">Glycoprotein</keyword>
<keyword id="KW-0337">GPI-anchor biosynthesis</keyword>
<keyword id="KW-0472">Membrane</keyword>
<keyword id="KW-1185">Reference proteome</keyword>
<keyword id="KW-0812">Transmembrane</keyword>
<keyword id="KW-1133">Transmembrane helix</keyword>
<reference key="1">
    <citation type="journal article" date="2005" name="Nature">
        <title>Sequencing of Aspergillus nidulans and comparative analysis with A. fumigatus and A. oryzae.</title>
        <authorList>
            <person name="Galagan J.E."/>
            <person name="Calvo S.E."/>
            <person name="Cuomo C."/>
            <person name="Ma L.-J."/>
            <person name="Wortman J.R."/>
            <person name="Batzoglou S."/>
            <person name="Lee S.-I."/>
            <person name="Bastuerkmen M."/>
            <person name="Spevak C.C."/>
            <person name="Clutterbuck J."/>
            <person name="Kapitonov V."/>
            <person name="Jurka J."/>
            <person name="Scazzocchio C."/>
            <person name="Farman M.L."/>
            <person name="Butler J."/>
            <person name="Purcell S."/>
            <person name="Harris S."/>
            <person name="Braus G.H."/>
            <person name="Draht O."/>
            <person name="Busch S."/>
            <person name="D'Enfert C."/>
            <person name="Bouchier C."/>
            <person name="Goldman G.H."/>
            <person name="Bell-Pedersen D."/>
            <person name="Griffiths-Jones S."/>
            <person name="Doonan J.H."/>
            <person name="Yu J."/>
            <person name="Vienken K."/>
            <person name="Pain A."/>
            <person name="Freitag M."/>
            <person name="Selker E.U."/>
            <person name="Archer D.B."/>
            <person name="Penalva M.A."/>
            <person name="Oakley B.R."/>
            <person name="Momany M."/>
            <person name="Tanaka T."/>
            <person name="Kumagai T."/>
            <person name="Asai K."/>
            <person name="Machida M."/>
            <person name="Nierman W.C."/>
            <person name="Denning D.W."/>
            <person name="Caddick M.X."/>
            <person name="Hynes M."/>
            <person name="Paoletti M."/>
            <person name="Fischer R."/>
            <person name="Miller B.L."/>
            <person name="Dyer P.S."/>
            <person name="Sachs M.S."/>
            <person name="Osmani S.A."/>
            <person name="Birren B.W."/>
        </authorList>
    </citation>
    <scope>NUCLEOTIDE SEQUENCE [LARGE SCALE GENOMIC DNA]</scope>
    <source>
        <strain>FGSC A4 / ATCC 38163 / CBS 112.46 / NRRL 194 / M139</strain>
    </source>
</reference>
<reference key="2">
    <citation type="journal article" date="2009" name="Fungal Genet. Biol.">
        <title>The 2008 update of the Aspergillus nidulans genome annotation: a community effort.</title>
        <authorList>
            <person name="Wortman J.R."/>
            <person name="Gilsenan J.M."/>
            <person name="Joardar V."/>
            <person name="Deegan J."/>
            <person name="Clutterbuck J."/>
            <person name="Andersen M.R."/>
            <person name="Archer D."/>
            <person name="Bencina M."/>
            <person name="Braus G."/>
            <person name="Coutinho P."/>
            <person name="von Dohren H."/>
            <person name="Doonan J."/>
            <person name="Driessen A.J."/>
            <person name="Durek P."/>
            <person name="Espeso E."/>
            <person name="Fekete E."/>
            <person name="Flipphi M."/>
            <person name="Estrada C.G."/>
            <person name="Geysens S."/>
            <person name="Goldman G."/>
            <person name="de Groot P.W."/>
            <person name="Hansen K."/>
            <person name="Harris S.D."/>
            <person name="Heinekamp T."/>
            <person name="Helmstaedt K."/>
            <person name="Henrissat B."/>
            <person name="Hofmann G."/>
            <person name="Homan T."/>
            <person name="Horio T."/>
            <person name="Horiuchi H."/>
            <person name="James S."/>
            <person name="Jones M."/>
            <person name="Karaffa L."/>
            <person name="Karanyi Z."/>
            <person name="Kato M."/>
            <person name="Keller N."/>
            <person name="Kelly D.E."/>
            <person name="Kiel J.A."/>
            <person name="Kim J.M."/>
            <person name="van der Klei I.J."/>
            <person name="Klis F.M."/>
            <person name="Kovalchuk A."/>
            <person name="Krasevec N."/>
            <person name="Kubicek C.P."/>
            <person name="Liu B."/>
            <person name="Maccabe A."/>
            <person name="Meyer V."/>
            <person name="Mirabito P."/>
            <person name="Miskei M."/>
            <person name="Mos M."/>
            <person name="Mullins J."/>
            <person name="Nelson D.R."/>
            <person name="Nielsen J."/>
            <person name="Oakley B.R."/>
            <person name="Osmani S.A."/>
            <person name="Pakula T."/>
            <person name="Paszewski A."/>
            <person name="Paulsen I."/>
            <person name="Pilsyk S."/>
            <person name="Pocsi I."/>
            <person name="Punt P.J."/>
            <person name="Ram A.F."/>
            <person name="Ren Q."/>
            <person name="Robellet X."/>
            <person name="Robson G."/>
            <person name="Seiboth B."/>
            <person name="van Solingen P."/>
            <person name="Specht T."/>
            <person name="Sun J."/>
            <person name="Taheri-Talesh N."/>
            <person name="Takeshita N."/>
            <person name="Ussery D."/>
            <person name="vanKuyk P.A."/>
            <person name="Visser H."/>
            <person name="van de Vondervoort P.J."/>
            <person name="de Vries R.P."/>
            <person name="Walton J."/>
            <person name="Xiang X."/>
            <person name="Xiong Y."/>
            <person name="Zeng A.P."/>
            <person name="Brandt B.W."/>
            <person name="Cornell M.J."/>
            <person name="van den Hondel C.A."/>
            <person name="Visser J."/>
            <person name="Oliver S.G."/>
            <person name="Turner G."/>
        </authorList>
    </citation>
    <scope>GENOME REANNOTATION</scope>
    <source>
        <strain>FGSC A4 / ATCC 38163 / CBS 112.46 / NRRL 194 / M139</strain>
    </source>
</reference>
<accession>Q5BB40</accession>
<accession>C8VMT3</accession>
<gene>
    <name type="primary">pbn1</name>
    <name type="ORF">AN2240</name>
</gene>
<feature type="chain" id="PRO_0000246304" description="Protein pbn1">
    <location>
        <begin position="1"/>
        <end position="526"/>
    </location>
</feature>
<feature type="topological domain" description="Lumenal" evidence="2">
    <location>
        <begin position="1"/>
        <end position="484"/>
    </location>
</feature>
<feature type="transmembrane region" description="Helical" evidence="2">
    <location>
        <begin position="485"/>
        <end position="505"/>
    </location>
</feature>
<feature type="topological domain" description="Cytoplasmic" evidence="2">
    <location>
        <begin position="506"/>
        <end position="526"/>
    </location>
</feature>
<feature type="glycosylation site" description="N-linked (GlcNAc...) asparagine" evidence="2">
    <location>
        <position position="385"/>
    </location>
</feature>
<dbReference type="EMBL" id="AACD01000036">
    <property type="protein sequence ID" value="EAA63925.1"/>
    <property type="status" value="ALT_SEQ"/>
    <property type="molecule type" value="Genomic_DNA"/>
</dbReference>
<dbReference type="EMBL" id="BN001307">
    <property type="protein sequence ID" value="CBF86444.1"/>
    <property type="status" value="ALT_SEQ"/>
    <property type="molecule type" value="Genomic_DNA"/>
</dbReference>
<dbReference type="RefSeq" id="XP_659844.1">
    <property type="nucleotide sequence ID" value="XM_654752.1"/>
</dbReference>
<dbReference type="STRING" id="227321.Q5BB40"/>
<dbReference type="GlyCosmos" id="Q5BB40">
    <property type="glycosylation" value="1 site, No reported glycans"/>
</dbReference>
<dbReference type="VEuPathDB" id="FungiDB:AN2240"/>
<dbReference type="eggNOG" id="ENOG502QS8N">
    <property type="taxonomic scope" value="Eukaryota"/>
</dbReference>
<dbReference type="HOGENOM" id="CLU_030047_0_0_1"/>
<dbReference type="InParanoid" id="Q5BB40"/>
<dbReference type="UniPathway" id="UPA00196"/>
<dbReference type="Proteomes" id="UP000000560">
    <property type="component" value="Chromosome VII"/>
</dbReference>
<dbReference type="GO" id="GO:0005789">
    <property type="term" value="C:endoplasmic reticulum membrane"/>
    <property type="evidence" value="ECO:0007669"/>
    <property type="project" value="UniProtKB-SubCell"/>
</dbReference>
<dbReference type="GO" id="GO:1990529">
    <property type="term" value="C:glycosylphosphatidylinositol-mannosyltransferase I complex"/>
    <property type="evidence" value="ECO:0000318"/>
    <property type="project" value="GO_Central"/>
</dbReference>
<dbReference type="GO" id="GO:0006506">
    <property type="term" value="P:GPI anchor biosynthetic process"/>
    <property type="evidence" value="ECO:0000318"/>
    <property type="project" value="GO_Central"/>
</dbReference>
<dbReference type="InterPro" id="IPR042322">
    <property type="entry name" value="Pbn1"/>
</dbReference>
<dbReference type="InterPro" id="IPR013233">
    <property type="entry name" value="PIG-X/PBN1"/>
</dbReference>
<dbReference type="PANTHER" id="PTHR28533">
    <property type="entry name" value="PROTEIN PBN1"/>
    <property type="match status" value="1"/>
</dbReference>
<dbReference type="PANTHER" id="PTHR28533:SF1">
    <property type="entry name" value="PROTEIN PBN1"/>
    <property type="match status" value="1"/>
</dbReference>
<dbReference type="Pfam" id="PF08320">
    <property type="entry name" value="PIG-X"/>
    <property type="match status" value="1"/>
</dbReference>
<dbReference type="SMART" id="SM00780">
    <property type="entry name" value="PIG-X"/>
    <property type="match status" value="1"/>
</dbReference>
<organism>
    <name type="scientific">Emericella nidulans (strain FGSC A4 / ATCC 38163 / CBS 112.46 / NRRL 194 / M139)</name>
    <name type="common">Aspergillus nidulans</name>
    <dbReference type="NCBI Taxonomy" id="227321"/>
    <lineage>
        <taxon>Eukaryota</taxon>
        <taxon>Fungi</taxon>
        <taxon>Dikarya</taxon>
        <taxon>Ascomycota</taxon>
        <taxon>Pezizomycotina</taxon>
        <taxon>Eurotiomycetes</taxon>
        <taxon>Eurotiomycetidae</taxon>
        <taxon>Eurotiales</taxon>
        <taxon>Aspergillaceae</taxon>
        <taxon>Aspergillus</taxon>
        <taxon>Aspergillus subgen. Nidulantes</taxon>
    </lineage>
</organism>
<name>PBN1_EMENI</name>
<comment type="function">
    <text evidence="1">Required for proper folding and/or the stability of a subset of proteins in the endoplasmic reticulum. Component of glycosylphosphatidylinositol-mannosyltransferase 1 which transfers the first of the 4 mannoses in the GPI-anchor precursors during GPI-anchor biosynthesis. Probably acts by stabilizing the mannosyltransferase gpi14 (By similarity).</text>
</comment>
<comment type="pathway">
    <text>Glycolipid biosynthesis; glycosylphosphatidylinositol-anchor biosynthesis.</text>
</comment>
<comment type="subcellular location">
    <subcellularLocation>
        <location evidence="1">Endoplasmic reticulum membrane</location>
        <topology evidence="1">Single-pass type III membrane protein</topology>
    </subcellularLocation>
</comment>
<comment type="similarity">
    <text evidence="3">Belongs to the PIGX family.</text>
</comment>
<comment type="sequence caution" evidence="3">
    <conflict type="erroneous gene model prediction">
        <sequence resource="EMBL-CDS" id="CBF86444"/>
    </conflict>
</comment>
<comment type="sequence caution" evidence="3">
    <conflict type="erroneous gene model prediction">
        <sequence resource="EMBL-CDS" id="EAA63925"/>
    </conflict>
</comment>